<reference key="1">
    <citation type="journal article" date="2005" name="Nature">
        <title>The genome of the social amoeba Dictyostelium discoideum.</title>
        <authorList>
            <person name="Eichinger L."/>
            <person name="Pachebat J.A."/>
            <person name="Gloeckner G."/>
            <person name="Rajandream M.A."/>
            <person name="Sucgang R."/>
            <person name="Berriman M."/>
            <person name="Song J."/>
            <person name="Olsen R."/>
            <person name="Szafranski K."/>
            <person name="Xu Q."/>
            <person name="Tunggal B."/>
            <person name="Kummerfeld S."/>
            <person name="Madera M."/>
            <person name="Konfortov B.A."/>
            <person name="Rivero F."/>
            <person name="Bankier A.T."/>
            <person name="Lehmann R."/>
            <person name="Hamlin N."/>
            <person name="Davies R."/>
            <person name="Gaudet P."/>
            <person name="Fey P."/>
            <person name="Pilcher K."/>
            <person name="Chen G."/>
            <person name="Saunders D."/>
            <person name="Sodergren E.J."/>
            <person name="Davis P."/>
            <person name="Kerhornou A."/>
            <person name="Nie X."/>
            <person name="Hall N."/>
            <person name="Anjard C."/>
            <person name="Hemphill L."/>
            <person name="Bason N."/>
            <person name="Farbrother P."/>
            <person name="Desany B."/>
            <person name="Just E."/>
            <person name="Morio T."/>
            <person name="Rost R."/>
            <person name="Churcher C.M."/>
            <person name="Cooper J."/>
            <person name="Haydock S."/>
            <person name="van Driessche N."/>
            <person name="Cronin A."/>
            <person name="Goodhead I."/>
            <person name="Muzny D.M."/>
            <person name="Mourier T."/>
            <person name="Pain A."/>
            <person name="Lu M."/>
            <person name="Harper D."/>
            <person name="Lindsay R."/>
            <person name="Hauser H."/>
            <person name="James K.D."/>
            <person name="Quiles M."/>
            <person name="Madan Babu M."/>
            <person name="Saito T."/>
            <person name="Buchrieser C."/>
            <person name="Wardroper A."/>
            <person name="Felder M."/>
            <person name="Thangavelu M."/>
            <person name="Johnson D."/>
            <person name="Knights A."/>
            <person name="Loulseged H."/>
            <person name="Mungall K.L."/>
            <person name="Oliver K."/>
            <person name="Price C."/>
            <person name="Quail M.A."/>
            <person name="Urushihara H."/>
            <person name="Hernandez J."/>
            <person name="Rabbinowitsch E."/>
            <person name="Steffen D."/>
            <person name="Sanders M."/>
            <person name="Ma J."/>
            <person name="Kohara Y."/>
            <person name="Sharp S."/>
            <person name="Simmonds M.N."/>
            <person name="Spiegler S."/>
            <person name="Tivey A."/>
            <person name="Sugano S."/>
            <person name="White B."/>
            <person name="Walker D."/>
            <person name="Woodward J.R."/>
            <person name="Winckler T."/>
            <person name="Tanaka Y."/>
            <person name="Shaulsky G."/>
            <person name="Schleicher M."/>
            <person name="Weinstock G.M."/>
            <person name="Rosenthal A."/>
            <person name="Cox E.C."/>
            <person name="Chisholm R.L."/>
            <person name="Gibbs R.A."/>
            <person name="Loomis W.F."/>
            <person name="Platzer M."/>
            <person name="Kay R.R."/>
            <person name="Williams J.G."/>
            <person name="Dear P.H."/>
            <person name="Noegel A.A."/>
            <person name="Barrell B.G."/>
            <person name="Kuspa A."/>
        </authorList>
    </citation>
    <scope>NUCLEOTIDE SEQUENCE [LARGE SCALE GENOMIC DNA]</scope>
    <source>
        <strain>AX4</strain>
    </source>
</reference>
<reference key="2">
    <citation type="submission" date="2008-04" db="UniProtKB">
        <authorList>
            <person name="Bienvenut W.V."/>
            <person name="Patel H."/>
            <person name="Brunton V.G."/>
            <person name="Frame M.C."/>
        </authorList>
    </citation>
    <scope>PROTEIN SEQUENCE OF 2-10; 37-80; 114-123; 128-135 AND 174-188</scope>
    <scope>CLEAVAGE OF INITIATOR METHIONINE</scope>
    <scope>ACETYLATION AT THR-2</scope>
    <scope>IDENTIFICATION BY MASS SPECTROMETRY</scope>
</reference>
<keyword id="KW-0007">Acetylation</keyword>
<keyword id="KW-0903">Direct protein sequencing</keyword>
<keyword id="KW-1185">Reference proteome</keyword>
<keyword id="KW-0808">Transferase</keyword>
<comment type="function">
    <text evidence="1">Conjugation of reduced glutathione to a wide number of exogenous and endogenous hydrophobic electrophiles.</text>
</comment>
<comment type="catalytic activity">
    <reaction evidence="4">
        <text>RX + glutathione = an S-substituted glutathione + a halide anion + H(+)</text>
        <dbReference type="Rhea" id="RHEA:16437"/>
        <dbReference type="ChEBI" id="CHEBI:15378"/>
        <dbReference type="ChEBI" id="CHEBI:16042"/>
        <dbReference type="ChEBI" id="CHEBI:17792"/>
        <dbReference type="ChEBI" id="CHEBI:57925"/>
        <dbReference type="ChEBI" id="CHEBI:90779"/>
        <dbReference type="EC" id="2.5.1.18"/>
    </reaction>
    <physiologicalReaction direction="left-to-right" evidence="4">
        <dbReference type="Rhea" id="RHEA:16438"/>
    </physiologicalReaction>
</comment>
<comment type="similarity">
    <text evidence="6">Belongs to the GST superfamily. Alpha family.</text>
</comment>
<proteinExistence type="evidence at protein level"/>
<accession>Q54VI4</accession>
<dbReference type="EC" id="2.5.1.18"/>
<dbReference type="EMBL" id="AAFI02000035">
    <property type="protein sequence ID" value="EAL67385.1"/>
    <property type="molecule type" value="Genomic_DNA"/>
</dbReference>
<dbReference type="RefSeq" id="XP_641371.1">
    <property type="nucleotide sequence ID" value="XM_636279.1"/>
</dbReference>
<dbReference type="SMR" id="Q54VI4"/>
<dbReference type="FunCoup" id="Q54VI4">
    <property type="interactions" value="24"/>
</dbReference>
<dbReference type="STRING" id="44689.Q54VI4"/>
<dbReference type="PaxDb" id="44689-DDB0231429"/>
<dbReference type="EnsemblProtists" id="EAL67385">
    <property type="protein sequence ID" value="EAL67385"/>
    <property type="gene ID" value="DDB_G0280317"/>
</dbReference>
<dbReference type="GeneID" id="8622505"/>
<dbReference type="KEGG" id="ddi:DDB_G0280317"/>
<dbReference type="dictyBase" id="DDB_G0280317"/>
<dbReference type="VEuPathDB" id="AmoebaDB:DDB_G0280317"/>
<dbReference type="eggNOG" id="KOG1695">
    <property type="taxonomic scope" value="Eukaryota"/>
</dbReference>
<dbReference type="HOGENOM" id="CLU_039475_1_0_1"/>
<dbReference type="InParanoid" id="Q54VI4"/>
<dbReference type="OMA" id="AYLNIDY"/>
<dbReference type="PhylomeDB" id="Q54VI4"/>
<dbReference type="Reactome" id="R-DDI-156590">
    <property type="pathway name" value="Glutathione conjugation"/>
</dbReference>
<dbReference type="Reactome" id="R-DDI-189483">
    <property type="pathway name" value="Heme degradation"/>
</dbReference>
<dbReference type="Reactome" id="R-DDI-3299685">
    <property type="pathway name" value="Detoxification of Reactive Oxygen Species"/>
</dbReference>
<dbReference type="Reactome" id="R-DDI-6798695">
    <property type="pathway name" value="Neutrophil degranulation"/>
</dbReference>
<dbReference type="Reactome" id="R-DDI-9748787">
    <property type="pathway name" value="Azathioprine ADME"/>
</dbReference>
<dbReference type="Reactome" id="R-DDI-9753281">
    <property type="pathway name" value="Paracetamol ADME"/>
</dbReference>
<dbReference type="PRO" id="PR:Q54VI4"/>
<dbReference type="Proteomes" id="UP000002195">
    <property type="component" value="Chromosome 3"/>
</dbReference>
<dbReference type="GO" id="GO:0004364">
    <property type="term" value="F:glutathione transferase activity"/>
    <property type="evidence" value="ECO:0000318"/>
    <property type="project" value="GO_Central"/>
</dbReference>
<dbReference type="GO" id="GO:0006749">
    <property type="term" value="P:glutathione metabolic process"/>
    <property type="evidence" value="ECO:0000318"/>
    <property type="project" value="GO_Central"/>
</dbReference>
<dbReference type="GO" id="GO:1904643">
    <property type="term" value="P:response to curcumin"/>
    <property type="evidence" value="ECO:0000314"/>
    <property type="project" value="dictyBase"/>
</dbReference>
<dbReference type="CDD" id="cd03192">
    <property type="entry name" value="GST_C_Sigma_like"/>
    <property type="match status" value="1"/>
</dbReference>
<dbReference type="CDD" id="cd03039">
    <property type="entry name" value="GST_N_Sigma_like"/>
    <property type="match status" value="1"/>
</dbReference>
<dbReference type="FunFam" id="1.20.1050.130:FF:000014">
    <property type="entry name" value="Putative glutathione S-transferase alpha-5"/>
    <property type="match status" value="1"/>
</dbReference>
<dbReference type="Gene3D" id="1.20.1050.130">
    <property type="match status" value="1"/>
</dbReference>
<dbReference type="InterPro" id="IPR010987">
    <property type="entry name" value="Glutathione-S-Trfase_C-like"/>
</dbReference>
<dbReference type="InterPro" id="IPR036282">
    <property type="entry name" value="Glutathione-S-Trfase_C_sf"/>
</dbReference>
<dbReference type="InterPro" id="IPR040079">
    <property type="entry name" value="Glutathione_S-Trfase"/>
</dbReference>
<dbReference type="InterPro" id="IPR004045">
    <property type="entry name" value="Glutathione_S-Trfase_N"/>
</dbReference>
<dbReference type="InterPro" id="IPR004046">
    <property type="entry name" value="GST_C"/>
</dbReference>
<dbReference type="InterPro" id="IPR050213">
    <property type="entry name" value="GST_superfamily"/>
</dbReference>
<dbReference type="InterPro" id="IPR036249">
    <property type="entry name" value="Thioredoxin-like_sf"/>
</dbReference>
<dbReference type="PANTHER" id="PTHR11571">
    <property type="entry name" value="GLUTATHIONE S-TRANSFERASE"/>
    <property type="match status" value="1"/>
</dbReference>
<dbReference type="PANTHER" id="PTHR11571:SF150">
    <property type="entry name" value="GLUTATHIONE S-TRANSFERASE"/>
    <property type="match status" value="1"/>
</dbReference>
<dbReference type="Pfam" id="PF14497">
    <property type="entry name" value="GST_C_3"/>
    <property type="match status" value="1"/>
</dbReference>
<dbReference type="Pfam" id="PF02798">
    <property type="entry name" value="GST_N"/>
    <property type="match status" value="1"/>
</dbReference>
<dbReference type="SFLD" id="SFLDS00019">
    <property type="entry name" value="Glutathione_Transferase_(cytos"/>
    <property type="match status" value="1"/>
</dbReference>
<dbReference type="SUPFAM" id="SSF47616">
    <property type="entry name" value="GST C-terminal domain-like"/>
    <property type="match status" value="1"/>
</dbReference>
<dbReference type="SUPFAM" id="SSF52833">
    <property type="entry name" value="Thioredoxin-like"/>
    <property type="match status" value="1"/>
</dbReference>
<dbReference type="PROSITE" id="PS50405">
    <property type="entry name" value="GST_CTER"/>
    <property type="match status" value="1"/>
</dbReference>
<dbReference type="PROSITE" id="PS50404">
    <property type="entry name" value="GST_NTER"/>
    <property type="match status" value="1"/>
</dbReference>
<name>GSTA3_DICDI</name>
<sequence>MTKPQLSYFKVRALGQFPRVLLSYLSIDYDNNYIDKIDENIIDDLKYGQLPLYTDSNGFKLVQSMAISKYIASQHDFVGKTPEEKALVDETLAAVNIDVFTFIIRVFRGVEEKEKIQEIIIPRFFAKWNQILGEKKYLAGGNSYTLADLYVYVAYEYIGYVLPFAADLLYNGKFPHLDSLKEHFESNKGVAEYLKNRPITERKI</sequence>
<organism>
    <name type="scientific">Dictyostelium discoideum</name>
    <name type="common">Social amoeba</name>
    <dbReference type="NCBI Taxonomy" id="44689"/>
    <lineage>
        <taxon>Eukaryota</taxon>
        <taxon>Amoebozoa</taxon>
        <taxon>Evosea</taxon>
        <taxon>Eumycetozoa</taxon>
        <taxon>Dictyostelia</taxon>
        <taxon>Dictyosteliales</taxon>
        <taxon>Dictyosteliaceae</taxon>
        <taxon>Dictyostelium</taxon>
    </lineage>
</organism>
<evidence type="ECO:0000250" key="1"/>
<evidence type="ECO:0000250" key="2">
    <source>
        <dbReference type="UniProtKB" id="P13745"/>
    </source>
</evidence>
<evidence type="ECO:0000250" key="3">
    <source>
        <dbReference type="UniProtKB" id="P30711"/>
    </source>
</evidence>
<evidence type="ECO:0000250" key="4">
    <source>
        <dbReference type="UniProtKB" id="Q16772"/>
    </source>
</evidence>
<evidence type="ECO:0000269" key="5">
    <source ref="2"/>
</evidence>
<evidence type="ECO:0000305" key="6"/>
<protein>
    <recommendedName>
        <fullName>Putative glutathione S-transferase alpha-3</fullName>
        <ecNumber>2.5.1.18</ecNumber>
    </recommendedName>
    <alternativeName>
        <fullName>GST class-alpha 3</fullName>
    </alternativeName>
</protein>
<feature type="initiator methionine" description="Removed" evidence="5">
    <location>
        <position position="1"/>
    </location>
</feature>
<feature type="chain" id="PRO_0000350740" description="Putative glutathione S-transferase alpha-3">
    <location>
        <begin position="2"/>
        <end position="204"/>
    </location>
</feature>
<feature type="domain" description="GST N-terminal">
    <location>
        <begin position="2"/>
        <end position="79"/>
    </location>
</feature>
<feature type="domain" description="GST C-terminal">
    <location>
        <begin position="81"/>
        <end position="202"/>
    </location>
</feature>
<feature type="binding site" evidence="2">
    <location>
        <position position="8"/>
    </location>
    <ligand>
        <name>glutathione</name>
        <dbReference type="ChEBI" id="CHEBI:57925"/>
    </ligand>
</feature>
<feature type="binding site" evidence="3">
    <location>
        <begin position="49"/>
        <end position="50"/>
    </location>
    <ligand>
        <name>glutathione</name>
        <dbReference type="ChEBI" id="CHEBI:57925"/>
    </ligand>
</feature>
<feature type="binding site" evidence="2">
    <location>
        <begin position="63"/>
        <end position="64"/>
    </location>
    <ligand>
        <name>glutathione</name>
        <dbReference type="ChEBI" id="CHEBI:57925"/>
    </ligand>
</feature>
<feature type="modified residue" description="N-acetylthreonine" evidence="5">
    <location>
        <position position="2"/>
    </location>
</feature>
<gene>
    <name type="primary">gsta3</name>
    <name type="ORF">DDB_G0280317</name>
</gene>